<feature type="signal peptide" evidence="2">
    <location>
        <begin position="1"/>
        <end position="20"/>
    </location>
</feature>
<feature type="chain" id="PRO_0000327845" description="Alpha-mannosidase F">
    <location>
        <begin position="21"/>
        <end position="994"/>
    </location>
</feature>
<feature type="active site" description="Nucleophile" evidence="1">
    <location>
        <position position="151"/>
    </location>
</feature>
<feature type="binding site" evidence="1">
    <location>
        <position position="35"/>
    </location>
    <ligand>
        <name>Zn(2+)</name>
        <dbReference type="ChEBI" id="CHEBI:29105"/>
    </ligand>
</feature>
<feature type="binding site" evidence="1">
    <location>
        <position position="37"/>
    </location>
    <ligand>
        <name>Zn(2+)</name>
        <dbReference type="ChEBI" id="CHEBI:29105"/>
    </ligand>
</feature>
<feature type="binding site" evidence="1">
    <location>
        <position position="151"/>
    </location>
    <ligand>
        <name>Zn(2+)</name>
        <dbReference type="ChEBI" id="CHEBI:29105"/>
    </ligand>
</feature>
<feature type="binding site" evidence="1">
    <location>
        <position position="392"/>
    </location>
    <ligand>
        <name>Zn(2+)</name>
        <dbReference type="ChEBI" id="CHEBI:29105"/>
    </ligand>
</feature>
<feature type="glycosylation site" description="N-linked (GlcNAc...) asparagine" evidence="2">
    <location>
        <position position="247"/>
    </location>
</feature>
<feature type="glycosylation site" description="N-linked (GlcNAc...) asparagine" evidence="2">
    <location>
        <position position="381"/>
    </location>
</feature>
<feature type="glycosylation site" description="N-linked (GlcNAc...) asparagine" evidence="2">
    <location>
        <position position="554"/>
    </location>
</feature>
<feature type="glycosylation site" description="N-linked (GlcNAc...) asparagine" evidence="2">
    <location>
        <position position="712"/>
    </location>
</feature>
<feature type="glycosylation site" description="N-linked (GlcNAc...) asparagine" evidence="2">
    <location>
        <position position="932"/>
    </location>
</feature>
<sequence>MKNFYYFILILLFFNEVCYSLKDGEIKLHLIPHSHCDSGWTSTMNEYYMGQVKSIISSMVQSLNVESNPPRKFVWSEIGFLEQWWDDMPIEIKNDFIKHVKNDRIEFVNGGWVMNDEACASLESVIRQLSNGHKFIREKFGKQPESGWQIDPFGHSSLTPTLQAQFGYKHVVLNRIHYELKKKFKEEKNLQFKWRGSPEGVGPKSDILAHVFDDFYTSPPHMSFDGYNFLAYGLPRLTMEMIELARNRSVFYKSPHVLIPMGGDFAFKNAYKSFEQMDQLVASINGQHANGESNVICQYSTLADFFSDTINWHNENKVSFNYYDSDFFPYADDSNTYWTGYYTSRPLLKGYERHVSSKLRSAEILSALQNDEKYYPNQLLNASKQVSILQHHDAISGTSKKHVVQDYFSRLQKADILVSEQSEKLLASALSQHSPTKLDIIDIGGSLNFPKNNDAISFILFNQLSWSKEELISIKVQSVGDHGESLNSPTNNACPYVLAQEDFLNEIEIDCSPRSDFKSDQSDDHKEFIQIDFPAKLKPFSSKLYYLKRKSNPNKSNWVLPKTNHFNSIENSIYTANLDENYLIKSLKSKSSRHGGGANQITEINQQLLTYSDIGGAYIFRTNKQVFQPPRQVYSTFTYIGKFYQEAQSILQDTHQISNRNGYYYYYGNNQQQQQQQQTISTFNYNSIKLINTGNEMIDKKINFNFHIRGINGTTTINRFTTDIDNNRELYSDNGLEMMHRKSISSQSVEVGRETQSYYPTINSVYIESQSTGKRFVCNNDRSRGVSSQGQGCLEMALHRSLTYEDGKGLEIPAIDESSINARFECYLDEVPSNSQQSNGGGGGDDIRKQSINYQHKFQIYQGQDSSYMSSKSFMLKPLPEFIHILSMERSGPRSIKLRIHNIENNNQSPITFDLNGLFSFIKSIKSIKEYNLSLINRFVDNNIDNIISSHRSIVGKNLFPIKDTPTRFNPINTKQTKITLYPSEIKAIEITYH</sequence>
<keyword id="KW-0325">Glycoprotein</keyword>
<keyword id="KW-0326">Glycosidase</keyword>
<keyword id="KW-0378">Hydrolase</keyword>
<keyword id="KW-0479">Metal-binding</keyword>
<keyword id="KW-1185">Reference proteome</keyword>
<keyword id="KW-0964">Secreted</keyword>
<keyword id="KW-0732">Signal</keyword>
<keyword id="KW-0862">Zinc</keyword>
<organism>
    <name type="scientific">Dictyostelium discoideum</name>
    <name type="common">Social amoeba</name>
    <dbReference type="NCBI Taxonomy" id="44689"/>
    <lineage>
        <taxon>Eukaryota</taxon>
        <taxon>Amoebozoa</taxon>
        <taxon>Evosea</taxon>
        <taxon>Eumycetozoa</taxon>
        <taxon>Dictyostelia</taxon>
        <taxon>Dictyosteliales</taxon>
        <taxon>Dictyosteliaceae</taxon>
        <taxon>Dictyostelium</taxon>
    </lineage>
</organism>
<dbReference type="EC" id="3.2.1.24"/>
<dbReference type="EMBL" id="AAFI02000099">
    <property type="protein sequence ID" value="EAL63817.1"/>
    <property type="molecule type" value="Genomic_DNA"/>
</dbReference>
<dbReference type="RefSeq" id="XP_637323.1">
    <property type="nucleotide sequence ID" value="XM_632231.1"/>
</dbReference>
<dbReference type="SMR" id="Q54KN4"/>
<dbReference type="GlyCosmos" id="Q54KN4">
    <property type="glycosylation" value="5 sites, No reported glycans"/>
</dbReference>
<dbReference type="GlyGen" id="Q54KN4">
    <property type="glycosylation" value="5 sites"/>
</dbReference>
<dbReference type="PaxDb" id="44689-DDB0231616"/>
<dbReference type="EnsemblProtists" id="EAL63817">
    <property type="protein sequence ID" value="EAL63817"/>
    <property type="gene ID" value="DDB_G0287231"/>
</dbReference>
<dbReference type="GeneID" id="8626020"/>
<dbReference type="KEGG" id="ddi:DDB_G0287231"/>
<dbReference type="dictyBase" id="DDB_G0287231">
    <property type="gene designation" value="manF"/>
</dbReference>
<dbReference type="VEuPathDB" id="AmoebaDB:DDB_G0287231"/>
<dbReference type="eggNOG" id="KOG1958">
    <property type="taxonomic scope" value="Eukaryota"/>
</dbReference>
<dbReference type="HOGENOM" id="CLU_004690_2_0_1"/>
<dbReference type="InParanoid" id="Q54KN4"/>
<dbReference type="OMA" id="WHNENKV"/>
<dbReference type="PhylomeDB" id="Q54KN4"/>
<dbReference type="Reactome" id="R-DDI-8853383">
    <property type="pathway name" value="Lysosomal oligosaccharide catabolism"/>
</dbReference>
<dbReference type="PRO" id="PR:Q54KN4"/>
<dbReference type="Proteomes" id="UP000002195">
    <property type="component" value="Chromosome 5"/>
</dbReference>
<dbReference type="GO" id="GO:0005576">
    <property type="term" value="C:extracellular region"/>
    <property type="evidence" value="ECO:0007669"/>
    <property type="project" value="UniProtKB-SubCell"/>
</dbReference>
<dbReference type="GO" id="GO:0005764">
    <property type="term" value="C:lysosome"/>
    <property type="evidence" value="ECO:0000318"/>
    <property type="project" value="GO_Central"/>
</dbReference>
<dbReference type="GO" id="GO:0004559">
    <property type="term" value="F:alpha-mannosidase activity"/>
    <property type="evidence" value="ECO:0000318"/>
    <property type="project" value="GO_Central"/>
</dbReference>
<dbReference type="GO" id="GO:0030246">
    <property type="term" value="F:carbohydrate binding"/>
    <property type="evidence" value="ECO:0007669"/>
    <property type="project" value="InterPro"/>
</dbReference>
<dbReference type="GO" id="GO:0046872">
    <property type="term" value="F:metal ion binding"/>
    <property type="evidence" value="ECO:0007669"/>
    <property type="project" value="UniProtKB-KW"/>
</dbReference>
<dbReference type="GO" id="GO:0006013">
    <property type="term" value="P:mannose metabolic process"/>
    <property type="evidence" value="ECO:0007669"/>
    <property type="project" value="InterPro"/>
</dbReference>
<dbReference type="CDD" id="cd00451">
    <property type="entry name" value="GH38N_AMII_euk"/>
    <property type="match status" value="1"/>
</dbReference>
<dbReference type="FunFam" id="1.20.1270.50:FF:000009">
    <property type="entry name" value="Alpha-mannosidase F"/>
    <property type="match status" value="1"/>
</dbReference>
<dbReference type="FunFam" id="2.70.98.30:FF:000026">
    <property type="entry name" value="Alpha-mannosidase F"/>
    <property type="match status" value="1"/>
</dbReference>
<dbReference type="FunFam" id="3.20.110.10:FF:000014">
    <property type="entry name" value="Alpha-mannosidase F"/>
    <property type="match status" value="1"/>
</dbReference>
<dbReference type="Gene3D" id="2.60.40.1360">
    <property type="match status" value="1"/>
</dbReference>
<dbReference type="Gene3D" id="3.20.110.10">
    <property type="entry name" value="Glycoside hydrolase 38, N terminal domain"/>
    <property type="match status" value="1"/>
</dbReference>
<dbReference type="Gene3D" id="1.20.1270.50">
    <property type="entry name" value="Glycoside hydrolase family 38, central domain"/>
    <property type="match status" value="1"/>
</dbReference>
<dbReference type="Gene3D" id="2.70.98.30">
    <property type="entry name" value="Golgi alpha-mannosidase II, domain 4"/>
    <property type="match status" value="1"/>
</dbReference>
<dbReference type="InterPro" id="IPR011013">
    <property type="entry name" value="Gal_mutarotase_sf_dom"/>
</dbReference>
<dbReference type="InterPro" id="IPR011330">
    <property type="entry name" value="Glyco_hydro/deAcase_b/a-brl"/>
</dbReference>
<dbReference type="InterPro" id="IPR011682">
    <property type="entry name" value="Glyco_hydro_38_C"/>
</dbReference>
<dbReference type="InterPro" id="IPR015341">
    <property type="entry name" value="Glyco_hydro_38_cen"/>
</dbReference>
<dbReference type="InterPro" id="IPR037094">
    <property type="entry name" value="Glyco_hydro_38_cen_sf"/>
</dbReference>
<dbReference type="InterPro" id="IPR000602">
    <property type="entry name" value="Glyco_hydro_38_N"/>
</dbReference>
<dbReference type="InterPro" id="IPR027291">
    <property type="entry name" value="Glyco_hydro_38_N_sf"/>
</dbReference>
<dbReference type="InterPro" id="IPR028995">
    <property type="entry name" value="Glyco_hydro_57/38_cen_sf"/>
</dbReference>
<dbReference type="InterPro" id="IPR050843">
    <property type="entry name" value="Glycosyl_Hydrlase_38"/>
</dbReference>
<dbReference type="PANTHER" id="PTHR11607">
    <property type="entry name" value="ALPHA-MANNOSIDASE"/>
    <property type="match status" value="1"/>
</dbReference>
<dbReference type="PANTHER" id="PTHR11607:SF68">
    <property type="entry name" value="ALPHA-MANNOSIDASE F"/>
    <property type="match status" value="1"/>
</dbReference>
<dbReference type="Pfam" id="PF09261">
    <property type="entry name" value="Alpha-mann_mid"/>
    <property type="match status" value="1"/>
</dbReference>
<dbReference type="Pfam" id="PF07748">
    <property type="entry name" value="Glyco_hydro_38C"/>
    <property type="match status" value="1"/>
</dbReference>
<dbReference type="Pfam" id="PF01074">
    <property type="entry name" value="Glyco_hydro_38N"/>
    <property type="match status" value="1"/>
</dbReference>
<dbReference type="SMART" id="SM00872">
    <property type="entry name" value="Alpha-mann_mid"/>
    <property type="match status" value="1"/>
</dbReference>
<dbReference type="SUPFAM" id="SSF88688">
    <property type="entry name" value="Families 57/38 glycoside transferase middle domain"/>
    <property type="match status" value="1"/>
</dbReference>
<dbReference type="SUPFAM" id="SSF74650">
    <property type="entry name" value="Galactose mutarotase-like"/>
    <property type="match status" value="1"/>
</dbReference>
<dbReference type="SUPFAM" id="SSF88713">
    <property type="entry name" value="Glycoside hydrolase/deacetylase"/>
    <property type="match status" value="1"/>
</dbReference>
<protein>
    <recommendedName>
        <fullName>Alpha-mannosidase F</fullName>
        <ecNumber>3.2.1.24</ecNumber>
    </recommendedName>
</protein>
<evidence type="ECO:0000250" key="1"/>
<evidence type="ECO:0000255" key="2"/>
<evidence type="ECO:0000305" key="3"/>
<gene>
    <name type="primary">manF</name>
    <name type="ORF">DDB_G0287231</name>
</gene>
<accession>Q54KN4</accession>
<name>MANF_DICDI</name>
<reference key="1">
    <citation type="journal article" date="2005" name="Nature">
        <title>The genome of the social amoeba Dictyostelium discoideum.</title>
        <authorList>
            <person name="Eichinger L."/>
            <person name="Pachebat J.A."/>
            <person name="Gloeckner G."/>
            <person name="Rajandream M.A."/>
            <person name="Sucgang R."/>
            <person name="Berriman M."/>
            <person name="Song J."/>
            <person name="Olsen R."/>
            <person name="Szafranski K."/>
            <person name="Xu Q."/>
            <person name="Tunggal B."/>
            <person name="Kummerfeld S."/>
            <person name="Madera M."/>
            <person name="Konfortov B.A."/>
            <person name="Rivero F."/>
            <person name="Bankier A.T."/>
            <person name="Lehmann R."/>
            <person name="Hamlin N."/>
            <person name="Davies R."/>
            <person name="Gaudet P."/>
            <person name="Fey P."/>
            <person name="Pilcher K."/>
            <person name="Chen G."/>
            <person name="Saunders D."/>
            <person name="Sodergren E.J."/>
            <person name="Davis P."/>
            <person name="Kerhornou A."/>
            <person name="Nie X."/>
            <person name="Hall N."/>
            <person name="Anjard C."/>
            <person name="Hemphill L."/>
            <person name="Bason N."/>
            <person name="Farbrother P."/>
            <person name="Desany B."/>
            <person name="Just E."/>
            <person name="Morio T."/>
            <person name="Rost R."/>
            <person name="Churcher C.M."/>
            <person name="Cooper J."/>
            <person name="Haydock S."/>
            <person name="van Driessche N."/>
            <person name="Cronin A."/>
            <person name="Goodhead I."/>
            <person name="Muzny D.M."/>
            <person name="Mourier T."/>
            <person name="Pain A."/>
            <person name="Lu M."/>
            <person name="Harper D."/>
            <person name="Lindsay R."/>
            <person name="Hauser H."/>
            <person name="James K.D."/>
            <person name="Quiles M."/>
            <person name="Madan Babu M."/>
            <person name="Saito T."/>
            <person name="Buchrieser C."/>
            <person name="Wardroper A."/>
            <person name="Felder M."/>
            <person name="Thangavelu M."/>
            <person name="Johnson D."/>
            <person name="Knights A."/>
            <person name="Loulseged H."/>
            <person name="Mungall K.L."/>
            <person name="Oliver K."/>
            <person name="Price C."/>
            <person name="Quail M.A."/>
            <person name="Urushihara H."/>
            <person name="Hernandez J."/>
            <person name="Rabbinowitsch E."/>
            <person name="Steffen D."/>
            <person name="Sanders M."/>
            <person name="Ma J."/>
            <person name="Kohara Y."/>
            <person name="Sharp S."/>
            <person name="Simmonds M.N."/>
            <person name="Spiegler S."/>
            <person name="Tivey A."/>
            <person name="Sugano S."/>
            <person name="White B."/>
            <person name="Walker D."/>
            <person name="Woodward J.R."/>
            <person name="Winckler T."/>
            <person name="Tanaka Y."/>
            <person name="Shaulsky G."/>
            <person name="Schleicher M."/>
            <person name="Weinstock G.M."/>
            <person name="Rosenthal A."/>
            <person name="Cox E.C."/>
            <person name="Chisholm R.L."/>
            <person name="Gibbs R.A."/>
            <person name="Loomis W.F."/>
            <person name="Platzer M."/>
            <person name="Kay R.R."/>
            <person name="Williams J.G."/>
            <person name="Dear P.H."/>
            <person name="Noegel A.A."/>
            <person name="Barrell B.G."/>
            <person name="Kuspa A."/>
        </authorList>
    </citation>
    <scope>NUCLEOTIDE SEQUENCE [LARGE SCALE GENOMIC DNA]</scope>
    <source>
        <strain>AX4</strain>
    </source>
</reference>
<proteinExistence type="inferred from homology"/>
<comment type="catalytic activity">
    <reaction>
        <text>Hydrolysis of terminal, non-reducing alpha-D-mannose residues in alpha-D-mannosides.</text>
        <dbReference type="EC" id="3.2.1.24"/>
    </reaction>
</comment>
<comment type="cofactor">
    <cofactor evidence="1">
        <name>Zn(2+)</name>
        <dbReference type="ChEBI" id="CHEBI:29105"/>
    </cofactor>
    <text evidence="1">Binds 1 zinc ion per subunit.</text>
</comment>
<comment type="subcellular location">
    <subcellularLocation>
        <location evidence="3">Secreted</location>
    </subcellularLocation>
</comment>
<comment type="similarity">
    <text evidence="3">Belongs to the glycosyl hydrolase 38 family.</text>
</comment>